<gene>
    <name evidence="5" type="primary">PIDD1</name>
</gene>
<sequence>MSGLQGPSVGDGCNGGGARAGGSCCRRRCFRGFGRRVQGAAFPGRQPAELGPVPRGLPAAAAPVCPAASAAAAGGILASEHSRGPSAAGGHPGPAASEPVLPPLPGPQRRATPGHTGCLSPGCPDQPARWSEWPGPSGPPGPELQQPGDTAGLCPADARSGCALAVSQLPL</sequence>
<protein>
    <recommendedName>
        <fullName evidence="4">PIDD1 alternative open reading frame protein</fullName>
    </recommendedName>
    <alternativeName>
        <fullName evidence="3">altPIDD1</fullName>
    </alternativeName>
</protein>
<proteinExistence type="evidence at protein level"/>
<dbReference type="EMBL" id="AP006621">
    <property type="status" value="NOT_ANNOTATED_CDS"/>
    <property type="molecule type" value="Genomic_DNA"/>
</dbReference>
<dbReference type="HGNC" id="HGNC:16491">
    <property type="gene designation" value="PIDD1"/>
</dbReference>
<dbReference type="Proteomes" id="UP000005640">
    <property type="component" value="Unplaced"/>
</dbReference>
<feature type="chain" id="PRO_0000462034" description="PIDD1 alternative open reading frame protein">
    <location>
        <begin position="1"/>
        <end position="171"/>
    </location>
</feature>
<feature type="region of interest" description="Disordered" evidence="1">
    <location>
        <begin position="1"/>
        <end position="22"/>
    </location>
</feature>
<feature type="region of interest" description="Disordered" evidence="1">
    <location>
        <begin position="76"/>
        <end position="156"/>
    </location>
</feature>
<feature type="compositionally biased region" description="Low complexity" evidence="1">
    <location>
        <begin position="84"/>
        <end position="99"/>
    </location>
</feature>
<feature type="mutagenesis site" description="Abolishes cleavage after UV irradiation." evidence="2">
    <original>D</original>
    <variation>A</variation>
    <location>
        <position position="11"/>
    </location>
</feature>
<comment type="subunit">
    <text evidence="2">Interacts with calpain-2 catalytic subunit CAPN2.</text>
</comment>
<comment type="subcellular location">
    <subcellularLocation>
        <location evidence="2">Cytoplasm</location>
    </subcellularLocation>
    <subcellularLocation>
        <location evidence="2">Cytoplasm</location>
        <location evidence="2">Cytoskeleton</location>
    </subcellularLocation>
    <text evidence="2">Localizes to actin-containing cytoskeletal structures.</text>
</comment>
<comment type="PTM">
    <text evidence="2">Cleaved in vitro following UV irradiation to induce caspase-mediated apoptosis and this cleavage is inhibited by a broad-spectrum caspase inhibitor.</text>
</comment>
<name>APDD1_HUMAN</name>
<evidence type="ECO:0000256" key="1">
    <source>
        <dbReference type="SAM" id="MobiDB-lite"/>
    </source>
</evidence>
<evidence type="ECO:0000269" key="2">
    <source>
    </source>
</evidence>
<evidence type="ECO:0000303" key="3">
    <source>
    </source>
</evidence>
<evidence type="ECO:0000305" key="4"/>
<evidence type="ECO:0000312" key="5">
    <source>
        <dbReference type="HGNC" id="HGNC:16491"/>
    </source>
</evidence>
<reference evidence="4" key="1">
    <citation type="journal article" date="2006" name="Nature">
        <title>Human chromosome 11 DNA sequence and analysis including novel gene identification.</title>
        <authorList>
            <person name="Taylor T.D."/>
            <person name="Noguchi H."/>
            <person name="Totoki Y."/>
            <person name="Toyoda A."/>
            <person name="Kuroki Y."/>
            <person name="Dewar K."/>
            <person name="Lloyd C."/>
            <person name="Itoh T."/>
            <person name="Takeda T."/>
            <person name="Kim D.-W."/>
            <person name="She X."/>
            <person name="Barlow K.F."/>
            <person name="Bloom T."/>
            <person name="Bruford E."/>
            <person name="Chang J.L."/>
            <person name="Cuomo C.A."/>
            <person name="Eichler E."/>
            <person name="FitzGerald M.G."/>
            <person name="Jaffe D.B."/>
            <person name="LaButti K."/>
            <person name="Nicol R."/>
            <person name="Park H.-S."/>
            <person name="Seaman C."/>
            <person name="Sougnez C."/>
            <person name="Yang X."/>
            <person name="Zimmer A.R."/>
            <person name="Zody M.C."/>
            <person name="Birren B.W."/>
            <person name="Nusbaum C."/>
            <person name="Fujiyama A."/>
            <person name="Hattori M."/>
            <person name="Rogers J."/>
            <person name="Lander E.S."/>
            <person name="Sakaki Y."/>
        </authorList>
    </citation>
    <scope>NUCLEOTIDE SEQUENCE [LARGE SCALE GENOMIC DNA]</scope>
</reference>
<reference evidence="4" key="2">
    <citation type="journal article" date="2025" name="Life. Sci Alliance">
        <title>Noncanonical altPIDD1 protein: unveiling the true major translational output of the PIDD1 gene.</title>
        <authorList>
            <person name="Comtois F."/>
            <person name="Jacques J.F."/>
            <person name="Metayer L."/>
            <person name="Ouedraogo W.Y.D."/>
            <person name="Ouangraoua A."/>
            <person name="Denault J.B."/>
            <person name="Roucou X."/>
        </authorList>
    </citation>
    <scope>IDENTIFICATION BY MASS SPECTROMETRY</scope>
    <scope>INTERACTION WITH CAPN2</scope>
    <scope>SUBCELLULAR LOCATION</scope>
    <scope>MUTAGENESIS OF ASP-11</scope>
</reference>
<accession>C0HMD6</accession>
<organism>
    <name type="scientific">Homo sapiens</name>
    <name type="common">Human</name>
    <dbReference type="NCBI Taxonomy" id="9606"/>
    <lineage>
        <taxon>Eukaryota</taxon>
        <taxon>Metazoa</taxon>
        <taxon>Chordata</taxon>
        <taxon>Craniata</taxon>
        <taxon>Vertebrata</taxon>
        <taxon>Euteleostomi</taxon>
        <taxon>Mammalia</taxon>
        <taxon>Eutheria</taxon>
        <taxon>Euarchontoglires</taxon>
        <taxon>Primates</taxon>
        <taxon>Haplorrhini</taxon>
        <taxon>Catarrhini</taxon>
        <taxon>Hominidae</taxon>
        <taxon>Homo</taxon>
    </lineage>
</organism>
<keyword id="KW-0963">Cytoplasm</keyword>
<keyword id="KW-0206">Cytoskeleton</keyword>
<keyword id="KW-1267">Proteomics identification</keyword>
<keyword id="KW-1185">Reference proteome</keyword>